<dbReference type="EMBL" id="CP000241">
    <property type="protein sequence ID" value="ABF85330.1"/>
    <property type="molecule type" value="Genomic_DNA"/>
</dbReference>
<dbReference type="RefSeq" id="WP_000030180.1">
    <property type="nucleotide sequence ID" value="NC_008086.1"/>
</dbReference>
<dbReference type="SMR" id="Q1CRU2"/>
<dbReference type="KEGG" id="hpa:HPAG1_1263"/>
<dbReference type="HOGENOM" id="CLU_041575_5_2_7"/>
<dbReference type="GO" id="GO:1990904">
    <property type="term" value="C:ribonucleoprotein complex"/>
    <property type="evidence" value="ECO:0007669"/>
    <property type="project" value="UniProtKB-KW"/>
</dbReference>
<dbReference type="GO" id="GO:0005840">
    <property type="term" value="C:ribosome"/>
    <property type="evidence" value="ECO:0007669"/>
    <property type="project" value="UniProtKB-KW"/>
</dbReference>
<dbReference type="GO" id="GO:0019843">
    <property type="term" value="F:rRNA binding"/>
    <property type="evidence" value="ECO:0007669"/>
    <property type="project" value="UniProtKB-UniRule"/>
</dbReference>
<dbReference type="GO" id="GO:0003735">
    <property type="term" value="F:structural constituent of ribosome"/>
    <property type="evidence" value="ECO:0007669"/>
    <property type="project" value="InterPro"/>
</dbReference>
<dbReference type="GO" id="GO:0006412">
    <property type="term" value="P:translation"/>
    <property type="evidence" value="ECO:0007669"/>
    <property type="project" value="UniProtKB-UniRule"/>
</dbReference>
<dbReference type="FunFam" id="3.40.1370.10:FF:000008">
    <property type="entry name" value="50S ribosomal protein L4"/>
    <property type="match status" value="1"/>
</dbReference>
<dbReference type="Gene3D" id="3.40.1370.10">
    <property type="match status" value="1"/>
</dbReference>
<dbReference type="HAMAP" id="MF_01328_B">
    <property type="entry name" value="Ribosomal_uL4_B"/>
    <property type="match status" value="1"/>
</dbReference>
<dbReference type="InterPro" id="IPR002136">
    <property type="entry name" value="Ribosomal_uL4"/>
</dbReference>
<dbReference type="InterPro" id="IPR013005">
    <property type="entry name" value="Ribosomal_uL4-like"/>
</dbReference>
<dbReference type="InterPro" id="IPR023574">
    <property type="entry name" value="Ribosomal_uL4_dom_sf"/>
</dbReference>
<dbReference type="NCBIfam" id="TIGR03953">
    <property type="entry name" value="rplD_bact"/>
    <property type="match status" value="1"/>
</dbReference>
<dbReference type="PANTHER" id="PTHR10746">
    <property type="entry name" value="50S RIBOSOMAL PROTEIN L4"/>
    <property type="match status" value="1"/>
</dbReference>
<dbReference type="PANTHER" id="PTHR10746:SF6">
    <property type="entry name" value="LARGE RIBOSOMAL SUBUNIT PROTEIN UL4M"/>
    <property type="match status" value="1"/>
</dbReference>
<dbReference type="Pfam" id="PF00573">
    <property type="entry name" value="Ribosomal_L4"/>
    <property type="match status" value="1"/>
</dbReference>
<dbReference type="SUPFAM" id="SSF52166">
    <property type="entry name" value="Ribosomal protein L4"/>
    <property type="match status" value="1"/>
</dbReference>
<organism>
    <name type="scientific">Helicobacter pylori (strain HPAG1)</name>
    <dbReference type="NCBI Taxonomy" id="357544"/>
    <lineage>
        <taxon>Bacteria</taxon>
        <taxon>Pseudomonadati</taxon>
        <taxon>Campylobacterota</taxon>
        <taxon>Epsilonproteobacteria</taxon>
        <taxon>Campylobacterales</taxon>
        <taxon>Helicobacteraceae</taxon>
        <taxon>Helicobacter</taxon>
    </lineage>
</organism>
<feature type="chain" id="PRO_1000052415" description="Large ribosomal subunit protein uL4">
    <location>
        <begin position="1"/>
        <end position="215"/>
    </location>
</feature>
<feature type="region of interest" description="Disordered" evidence="2">
    <location>
        <begin position="46"/>
        <end position="76"/>
    </location>
</feature>
<feature type="compositionally biased region" description="Gly residues" evidence="2">
    <location>
        <begin position="56"/>
        <end position="71"/>
    </location>
</feature>
<name>RL4_HELPH</name>
<evidence type="ECO:0000255" key="1">
    <source>
        <dbReference type="HAMAP-Rule" id="MF_01328"/>
    </source>
</evidence>
<evidence type="ECO:0000256" key="2">
    <source>
        <dbReference type="SAM" id="MobiDB-lite"/>
    </source>
</evidence>
<evidence type="ECO:0000305" key="3"/>
<reference key="1">
    <citation type="journal article" date="2006" name="Proc. Natl. Acad. Sci. U.S.A.">
        <title>The complete genome sequence of a chronic atrophic gastritis Helicobacter pylori strain: evolution during disease progression.</title>
        <authorList>
            <person name="Oh J.D."/>
            <person name="Kling-Baeckhed H."/>
            <person name="Giannakis M."/>
            <person name="Xu J."/>
            <person name="Fulton R.S."/>
            <person name="Fulton L.A."/>
            <person name="Cordum H.S."/>
            <person name="Wang C."/>
            <person name="Elliott G."/>
            <person name="Edwards J."/>
            <person name="Mardis E.R."/>
            <person name="Engstrand L.G."/>
            <person name="Gordon J.I."/>
        </authorList>
    </citation>
    <scope>NUCLEOTIDE SEQUENCE [LARGE SCALE GENOMIC DNA]</scope>
    <source>
        <strain>HPAG1</strain>
    </source>
</reference>
<sequence>MSKAIVLDSHLKEKGSVELPKRYEGINSHNLYLYVKHYLSSVRANTAKSKNRAEVSGGGRKPWAQKGGGRARAGSITSPVFVGGGVSHGATNKRNYNLKINKKQKRLALEYALEEKAQANKLFVVEKIAIKGVVEDNKRKHLTKEANQMFQALEQRDTLFVCLNMDECTELAFSNLKKCLIIDVNELNAYLLAAFSSVVMEEAAFQHVVQDKTEE</sequence>
<protein>
    <recommendedName>
        <fullName evidence="1">Large ribosomal subunit protein uL4</fullName>
    </recommendedName>
    <alternativeName>
        <fullName evidence="3">50S ribosomal protein L4</fullName>
    </alternativeName>
</protein>
<proteinExistence type="inferred from homology"/>
<accession>Q1CRU2</accession>
<comment type="function">
    <text evidence="1">One of the primary rRNA binding proteins, this protein initially binds near the 5'-end of the 23S rRNA. It is important during the early stages of 50S assembly. It makes multiple contacts with different domains of the 23S rRNA in the assembled 50S subunit and ribosome.</text>
</comment>
<comment type="function">
    <text evidence="1">Forms part of the polypeptide exit tunnel.</text>
</comment>
<comment type="subunit">
    <text evidence="1">Part of the 50S ribosomal subunit.</text>
</comment>
<comment type="similarity">
    <text evidence="1">Belongs to the universal ribosomal protein uL4 family.</text>
</comment>
<keyword id="KW-0687">Ribonucleoprotein</keyword>
<keyword id="KW-0689">Ribosomal protein</keyword>
<keyword id="KW-0694">RNA-binding</keyword>
<keyword id="KW-0699">rRNA-binding</keyword>
<gene>
    <name evidence="1" type="primary">rplD</name>
    <name type="ordered locus">HPAG1_1263</name>
</gene>